<protein>
    <recommendedName>
        <fullName>SCAN domain-containing protein 1</fullName>
    </recommendedName>
</protein>
<sequence length="179" mass="19142">MAATEPILATTGSPAAVPPEKLEGTGSSSAPERNCVGSSLPEASPPAPEPSSPNAAVPEAIPTPRAAASAALELPLGPAPVSVAPQAEAEARSTPGPAGSRLGPETFRQRFRQFRYQDAAGPREAFRQLRELSRQWLRPDIRTKEQIVEMLVQEQLLAILPEAARARRIRRRTDVRITG</sequence>
<evidence type="ECO:0000250" key="1"/>
<evidence type="ECO:0000255" key="2">
    <source>
        <dbReference type="PROSITE-ProRule" id="PRU00187"/>
    </source>
</evidence>
<evidence type="ECO:0000256" key="3">
    <source>
        <dbReference type="SAM" id="MobiDB-lite"/>
    </source>
</evidence>
<proteinExistence type="inferred from homology"/>
<keyword id="KW-0539">Nucleus</keyword>
<keyword id="KW-1185">Reference proteome</keyword>
<organism>
    <name type="scientific">Pan troglodytes</name>
    <name type="common">Chimpanzee</name>
    <dbReference type="NCBI Taxonomy" id="9598"/>
    <lineage>
        <taxon>Eukaryota</taxon>
        <taxon>Metazoa</taxon>
        <taxon>Chordata</taxon>
        <taxon>Craniata</taxon>
        <taxon>Vertebrata</taxon>
        <taxon>Euteleostomi</taxon>
        <taxon>Mammalia</taxon>
        <taxon>Eutheria</taxon>
        <taxon>Euarchontoglires</taxon>
        <taxon>Primates</taxon>
        <taxon>Haplorrhini</taxon>
        <taxon>Catarrhini</taxon>
        <taxon>Hominidae</taxon>
        <taxon>Pan</taxon>
    </lineage>
</organism>
<gene>
    <name type="primary">SCAND1</name>
</gene>
<dbReference type="EMBL" id="DQ977354">
    <property type="protein sequence ID" value="ABM91970.1"/>
    <property type="molecule type" value="Genomic_DNA"/>
</dbReference>
<dbReference type="RefSeq" id="NP_001074949.1">
    <property type="nucleotide sequence ID" value="NM_001081480.1"/>
</dbReference>
<dbReference type="SMR" id="A2T715"/>
<dbReference type="FunCoup" id="A2T715">
    <property type="interactions" value="645"/>
</dbReference>
<dbReference type="STRING" id="9598.ENSPTRP00000023084"/>
<dbReference type="PaxDb" id="9598-ENSPTRP00000023084"/>
<dbReference type="GeneID" id="458213"/>
<dbReference type="KEGG" id="ptr:458213"/>
<dbReference type="CTD" id="51282"/>
<dbReference type="eggNOG" id="KOG1721">
    <property type="taxonomic scope" value="Eukaryota"/>
</dbReference>
<dbReference type="HOGENOM" id="CLU_107409_0_0_1"/>
<dbReference type="InParanoid" id="A2T715"/>
<dbReference type="Proteomes" id="UP000002277">
    <property type="component" value="Unplaced"/>
</dbReference>
<dbReference type="GO" id="GO:0005634">
    <property type="term" value="C:nucleus"/>
    <property type="evidence" value="ECO:0007669"/>
    <property type="project" value="UniProtKB-SubCell"/>
</dbReference>
<dbReference type="CDD" id="cd07936">
    <property type="entry name" value="SCAN"/>
    <property type="match status" value="1"/>
</dbReference>
<dbReference type="FunFam" id="1.10.4020.10:FF:000003">
    <property type="entry name" value="SCAN domain-containing protein 1"/>
    <property type="match status" value="1"/>
</dbReference>
<dbReference type="Gene3D" id="1.10.4020.10">
    <property type="entry name" value="DNA breaking-rejoining enzymes"/>
    <property type="match status" value="1"/>
</dbReference>
<dbReference type="InterPro" id="IPR050916">
    <property type="entry name" value="SCAN-C2H2_zinc_finger"/>
</dbReference>
<dbReference type="InterPro" id="IPR003309">
    <property type="entry name" value="SCAN_dom"/>
</dbReference>
<dbReference type="InterPro" id="IPR038269">
    <property type="entry name" value="SCAN_sf"/>
</dbReference>
<dbReference type="PANTHER" id="PTHR45935">
    <property type="entry name" value="PROTEIN ZBED8-RELATED"/>
    <property type="match status" value="1"/>
</dbReference>
<dbReference type="PANTHER" id="PTHR45935:SF10">
    <property type="entry name" value="SCAN DOMAIN-CONTAINING 1"/>
    <property type="match status" value="1"/>
</dbReference>
<dbReference type="Pfam" id="PF02023">
    <property type="entry name" value="SCAN"/>
    <property type="match status" value="1"/>
</dbReference>
<dbReference type="SMART" id="SM00431">
    <property type="entry name" value="SCAN"/>
    <property type="match status" value="1"/>
</dbReference>
<dbReference type="SUPFAM" id="SSF47353">
    <property type="entry name" value="Retrovirus capsid dimerization domain-like"/>
    <property type="match status" value="1"/>
</dbReference>
<dbReference type="PROSITE" id="PS50804">
    <property type="entry name" value="SCAN_BOX"/>
    <property type="match status" value="1"/>
</dbReference>
<feature type="chain" id="PRO_0000285508" description="SCAN domain-containing protein 1">
    <location>
        <begin position="1"/>
        <end position="179"/>
    </location>
</feature>
<feature type="domain" description="SCAN box" evidence="2">
    <location>
        <begin position="108"/>
        <end position="166"/>
    </location>
</feature>
<feature type="region of interest" description="Disordered" evidence="3">
    <location>
        <begin position="1"/>
        <end position="107"/>
    </location>
</feature>
<feature type="compositionally biased region" description="Low complexity" evidence="3">
    <location>
        <begin position="52"/>
        <end position="80"/>
    </location>
</feature>
<name>SCND1_PANTR</name>
<accession>A2T715</accession>
<reference key="1">
    <citation type="submission" date="2006-08" db="EMBL/GenBank/DDBJ databases">
        <title>Positive selection in transcription factor genes on the human lineage.</title>
        <authorList>
            <person name="Nickel G.C."/>
            <person name="Tefft D.L."/>
            <person name="Trevarthen K."/>
            <person name="Funt J."/>
            <person name="Adams M.D."/>
        </authorList>
    </citation>
    <scope>NUCLEOTIDE SEQUENCE [GENOMIC DNA]</scope>
</reference>
<comment type="function">
    <text evidence="1">May regulate transcriptional activity.</text>
</comment>
<comment type="subunit">
    <text evidence="1">Interacts with ZNF202.</text>
</comment>
<comment type="subcellular location">
    <subcellularLocation>
        <location evidence="2">Nucleus</location>
    </subcellularLocation>
</comment>